<evidence type="ECO:0000250" key="1">
    <source>
        <dbReference type="UniProtKB" id="Q57WH1"/>
    </source>
</evidence>
<evidence type="ECO:0000255" key="2"/>
<evidence type="ECO:0000256" key="3">
    <source>
        <dbReference type="SAM" id="MobiDB-lite"/>
    </source>
</evidence>
<evidence type="ECO:0000269" key="4">
    <source>
    </source>
</evidence>
<evidence type="ECO:0000305" key="5"/>
<evidence type="ECO:0000312" key="6">
    <source>
        <dbReference type="EMBL" id="EDP01978.1"/>
    </source>
</evidence>
<reference key="1">
    <citation type="journal article" date="2007" name="Science">
        <title>The Chlamydomonas genome reveals the evolution of key animal and plant functions.</title>
        <authorList>
            <person name="Merchant S.S."/>
            <person name="Prochnik S.E."/>
            <person name="Vallon O."/>
            <person name="Harris E.H."/>
            <person name="Karpowicz S.J."/>
            <person name="Witman G.B."/>
            <person name="Terry A."/>
            <person name="Salamov A."/>
            <person name="Fritz-Laylin L.K."/>
            <person name="Marechal-Drouard L."/>
            <person name="Marshall W.F."/>
            <person name="Qu L.H."/>
            <person name="Nelson D.R."/>
            <person name="Sanderfoot A.A."/>
            <person name="Spalding M.H."/>
            <person name="Kapitonov V.V."/>
            <person name="Ren Q."/>
            <person name="Ferris P."/>
            <person name="Lindquist E."/>
            <person name="Shapiro H."/>
            <person name="Lucas S.M."/>
            <person name="Grimwood J."/>
            <person name="Schmutz J."/>
            <person name="Cardol P."/>
            <person name="Cerutti H."/>
            <person name="Chanfreau G."/>
            <person name="Chen C.L."/>
            <person name="Cognat V."/>
            <person name="Croft M.T."/>
            <person name="Dent R."/>
            <person name="Dutcher S."/>
            <person name="Fernandez E."/>
            <person name="Fukuzawa H."/>
            <person name="Gonzalez-Ballester D."/>
            <person name="Gonzalez-Halphen D."/>
            <person name="Hallmann A."/>
            <person name="Hanikenne M."/>
            <person name="Hippler M."/>
            <person name="Inwood W."/>
            <person name="Jabbari K."/>
            <person name="Kalanon M."/>
            <person name="Kuras R."/>
            <person name="Lefebvre P.A."/>
            <person name="Lemaire S.D."/>
            <person name="Lobanov A.V."/>
            <person name="Lohr M."/>
            <person name="Manuell A."/>
            <person name="Meier I."/>
            <person name="Mets L."/>
            <person name="Mittag M."/>
            <person name="Mittelmeier T."/>
            <person name="Moroney J.V."/>
            <person name="Moseley J."/>
            <person name="Napoli C."/>
            <person name="Nedelcu A.M."/>
            <person name="Niyogi K."/>
            <person name="Novoselov S.V."/>
            <person name="Paulsen I.T."/>
            <person name="Pazour G.J."/>
            <person name="Purton S."/>
            <person name="Ral J.P."/>
            <person name="Riano-Pachon D.M."/>
            <person name="Riekhof W."/>
            <person name="Rymarquis L."/>
            <person name="Schroda M."/>
            <person name="Stern D."/>
            <person name="Umen J."/>
            <person name="Willows R."/>
            <person name="Wilson N."/>
            <person name="Zimmer S.L."/>
            <person name="Allmer J."/>
            <person name="Balk J."/>
            <person name="Bisova K."/>
            <person name="Chen C.J."/>
            <person name="Elias M."/>
            <person name="Gendler K."/>
            <person name="Hauser C."/>
            <person name="Lamb M.R."/>
            <person name="Ledford H."/>
            <person name="Long J.C."/>
            <person name="Minagawa J."/>
            <person name="Page M.D."/>
            <person name="Pan J."/>
            <person name="Pootakham W."/>
            <person name="Roje S."/>
            <person name="Rose A."/>
            <person name="Stahlberg E."/>
            <person name="Terauchi A.M."/>
            <person name="Yang P."/>
            <person name="Ball S."/>
            <person name="Bowler C."/>
            <person name="Dieckmann C.L."/>
            <person name="Gladyshev V.N."/>
            <person name="Green P."/>
            <person name="Jorgensen R."/>
            <person name="Mayfield S."/>
            <person name="Mueller-Roeber B."/>
            <person name="Rajamani S."/>
            <person name="Sayre R.T."/>
            <person name="Brokstein P."/>
            <person name="Dubchak I."/>
            <person name="Goodstein D."/>
            <person name="Hornick L."/>
            <person name="Huang Y.W."/>
            <person name="Jhaveri J."/>
            <person name="Luo Y."/>
            <person name="Martinez D."/>
            <person name="Ngau W.C."/>
            <person name="Otillar B."/>
            <person name="Poliakov A."/>
            <person name="Porter A."/>
            <person name="Szajkowski L."/>
            <person name="Werner G."/>
            <person name="Zhou K."/>
            <person name="Grigoriev I.V."/>
            <person name="Rokhsar D.S."/>
            <person name="Grossman A.R."/>
        </authorList>
    </citation>
    <scope>NUCLEOTIDE SEQUENCE [LARGE SCALE GENOMIC DNA]</scope>
    <source>
        <strain>CC-503</strain>
    </source>
</reference>
<reference key="2">
    <citation type="journal article" date="2005" name="J. Cell Biol.">
        <title>Proteomic analysis of a eukaryotic cilium.</title>
        <authorList>
            <person name="Pazour G.J."/>
            <person name="Agrin N."/>
            <person name="Leszyk J."/>
            <person name="Witman G.B."/>
        </authorList>
    </citation>
    <scope>IDENTIFICATION BY MASS SPECTROMETRY</scope>
    <scope>SUBCELLULAR LOCATION</scope>
</reference>
<comment type="function">
    <text evidence="1">Flagellar protein involved in sperm flagellum axoneme organization and function.</text>
</comment>
<comment type="subcellular location">
    <subcellularLocation>
        <location evidence="4">Cell projection</location>
        <location evidence="4">Cilium</location>
        <location evidence="4">Flagellum</location>
    </subcellularLocation>
    <subcellularLocation>
        <location evidence="1">Cytoplasm</location>
        <location evidence="1">Cytoskeleton</location>
        <location evidence="1">Flagellum axoneme</location>
    </subcellularLocation>
</comment>
<comment type="similarity">
    <text evidence="5">Belongs to the CFAP44 family.</text>
</comment>
<sequence length="1764" mass="186158">MPLMVLLLSQRTGGVAQLLSVHGLDTHRRNNLVLLDEDTAASCIAGQLVLLSLSTGARRYLPGRDGGGVGAVAVHPSRTLLAVGEKARPGPASAGPAVYIYSYPGLEVVKVLRGGTERAYSALAFDGERGDTLASVGHFPDFLLTLWDWRQEAIVLRAKAFSQDVYGVAFSPYFEGQLTTSGQGHIRFWRMASTFTGLKLQGAIGKFGNVELSDVAAFVELPDGKVLSSTETGELLLWDGGLIKVVLTRPGSRPCHDGPIEALLLDRPAGRVLSAGADGRVRMWDFGAVNDAEPREDSHSLELSPLDEVVVAEGAALSALLADSGGRRWVVADKAGNVYTVALPPAGPVGKGAVVTRVASHPAGAVAGLQLSARTHTALVASADGCLRALDYVSGAVLAEAATPQRITAFTPLPAASPACPGGAMTAATGYRDGVVRLHARCAEGLALVGVAKAHKGAVAALAVSADGGRLVSAGEDGSVFFFDLTAQPQPGTGVPGMPACGLLAPRAFIKLPSGSGTVTCGVWEAAEGGGVLLGTNRGTILSVPLPPPDLNTHHSYEWAAGTSAVSSYQLVVPKPKRPKKKKGKNDGEEGDKEGGEQDEGQGGEDKGGEQADGEGGSKEGGEEGRAAEEEEEEEADDEADGGAGGPSSTTGELISLTLAPNEPGALLVTAGGVGHAARKAWRVRMGEPLAAPLLEGFASAPVTCLAHAGPEGRLALLGSGDGLVRLQALEEPFGSAAPGALPLWEAPLHDMQSGRVSGLGLSHDGAYLVTAAADGALHLLALALPPELAPPPTTQPGDEPLPGPAALPLRPPDVLAAAAYTLEEEKQQAERDQQVREAEEKKLSVRQRLGLIRAEFEALLAENEAAPEALRLPRADLEVDPGLRALMEAEALRREEVARLELAWESERQRLGLAKLRRYFLDGLESERVVLHSLRGSSTVTTFRVAKLSDETRAELAAMRQAARAAAAASAAAGGEGGAGGRDTDARGKGSDTGGGPGGDAAARARLAEATAALEEGTASGKLNKADLRRLARKRREAEWAAFNGTRPDDTYDSPADLAAIEEARRTIGDFKLKSDPNYVVPEEERLTPQRKRLAMLELEEALHDIAAAFNAKFFALRDVKRKVLADVRVKLAALAELAAAAGAATGGADPDATAAAYLAPFSGLPSGLLPEEEPAEAREAVTDADLAAFAARKAEDERKAAAAAAGGLGGFAGAAAGPKKPAAGGAAPAGGALAGGAAGSGSVAHGAGGPSAGGQQGLTAAEEALAKMMAAVPQSELEKGLAAYNRRRVEHMRSKLSEEITAMLDAFDDAHSALKAEKLGLEADVKAGQMRLLVGLQELQLLREFDKRESVLLAKRQAKLDDKQEIVDKIAECTDKLETKRLELEGLVARRAAVVAELDAVVPESDPFREALVRVFHRRIKRSKKKAGGGGGEDDYDSEEDEEDEDMGDDEVDDDDDGGEEVCPPGCDQSVYERVCDLREKRLDEEDMIAEFTKTIEVLRKEKEALAKKQRLVEQGLAAVNADMAEFQKEKQGRLNQVEVIVALRMHQIEYLLDGCLPDDLSACLVFSASQLRRLQARVDELEEEKAGLRAAHKELRRQHAALLRDKADKEARVAELEARAHDVQMLKFGQVIDLELLDRVSSSRGTEELREDLKKQELAYARELAEWDAKINARMDELVVLTRENTACLNAVSELTAAQRRLESGLTATRKGLFADPVQQRRAEVEERDALVALVNAQAAELDRLKGQLLALRRKDTSMYA</sequence>
<proteinExistence type="evidence at protein level"/>
<feature type="chain" id="PRO_0000431300" description="Cilia- and flagella-associated protein 44">
    <location>
        <begin position="1"/>
        <end position="1764"/>
    </location>
</feature>
<feature type="repeat" description="WD 1" evidence="2">
    <location>
        <begin position="115"/>
        <end position="157"/>
    </location>
</feature>
<feature type="repeat" description="WD 2" evidence="2">
    <location>
        <begin position="160"/>
        <end position="199"/>
    </location>
</feature>
<feature type="repeat" description="WD 3" evidence="2">
    <location>
        <begin position="208"/>
        <end position="248"/>
    </location>
</feature>
<feature type="repeat" description="WD 4" evidence="2">
    <location>
        <begin position="255"/>
        <end position="294"/>
    </location>
</feature>
<feature type="repeat" description="WD 5" evidence="2">
    <location>
        <begin position="361"/>
        <end position="400"/>
    </location>
</feature>
<feature type="repeat" description="WD 6" evidence="2">
    <location>
        <begin position="454"/>
        <end position="493"/>
    </location>
</feature>
<feature type="repeat" description="WD 7" evidence="2">
    <location>
        <begin position="495"/>
        <end position="534"/>
    </location>
</feature>
<feature type="repeat" description="WD 8" evidence="2">
    <location>
        <begin position="649"/>
        <end position="692"/>
    </location>
</feature>
<feature type="repeat" description="WD 9" evidence="2">
    <location>
        <begin position="707"/>
        <end position="752"/>
    </location>
</feature>
<feature type="repeat" description="WD 10" evidence="2">
    <location>
        <begin position="753"/>
        <end position="791"/>
    </location>
</feature>
<feature type="region of interest" description="Disordered" evidence="3">
    <location>
        <begin position="570"/>
        <end position="654"/>
    </location>
</feature>
<feature type="region of interest" description="Disordered" evidence="3">
    <location>
        <begin position="972"/>
        <end position="1003"/>
    </location>
</feature>
<feature type="region of interest" description="Disordered" evidence="3">
    <location>
        <begin position="1426"/>
        <end position="1468"/>
    </location>
</feature>
<feature type="coiled-coil region" evidence="2">
    <location>
        <begin position="821"/>
        <end position="850"/>
    </location>
</feature>
<feature type="coiled-coil region" evidence="2">
    <location>
        <begin position="1479"/>
        <end position="1517"/>
    </location>
</feature>
<feature type="coiled-coil region" evidence="2">
    <location>
        <begin position="1567"/>
        <end position="1674"/>
    </location>
</feature>
<feature type="coiled-coil region" evidence="2">
    <location>
        <begin position="1729"/>
        <end position="1758"/>
    </location>
</feature>
<feature type="compositionally biased region" description="Basic residues" evidence="3">
    <location>
        <begin position="575"/>
        <end position="584"/>
    </location>
</feature>
<feature type="compositionally biased region" description="Basic and acidic residues" evidence="3">
    <location>
        <begin position="585"/>
        <end position="596"/>
    </location>
</feature>
<feature type="compositionally biased region" description="Basic and acidic residues" evidence="3">
    <location>
        <begin position="604"/>
        <end position="628"/>
    </location>
</feature>
<feature type="compositionally biased region" description="Acidic residues" evidence="3">
    <location>
        <begin position="629"/>
        <end position="641"/>
    </location>
</feature>
<feature type="compositionally biased region" description="Acidic residues" evidence="3">
    <location>
        <begin position="1434"/>
        <end position="1462"/>
    </location>
</feature>
<organism>
    <name type="scientific">Chlamydomonas reinhardtii</name>
    <name type="common">Chlamydomonas smithii</name>
    <dbReference type="NCBI Taxonomy" id="3055"/>
    <lineage>
        <taxon>Eukaryota</taxon>
        <taxon>Viridiplantae</taxon>
        <taxon>Chlorophyta</taxon>
        <taxon>core chlorophytes</taxon>
        <taxon>Chlorophyceae</taxon>
        <taxon>CS clade</taxon>
        <taxon>Chlamydomonadales</taxon>
        <taxon>Chlamydomonadaceae</taxon>
        <taxon>Chlamydomonas</taxon>
    </lineage>
</organism>
<name>CFA44_CHLRE</name>
<accession>A8J1V4</accession>
<gene>
    <name evidence="5" type="primary">CFAP44</name>
    <name type="synonym">FAP44</name>
    <name evidence="6" type="ORF">CHLREDRAFT_149708</name>
</gene>
<keyword id="KW-0966">Cell projection</keyword>
<keyword id="KW-0969">Cilium</keyword>
<keyword id="KW-0175">Coiled coil</keyword>
<keyword id="KW-0963">Cytoplasm</keyword>
<keyword id="KW-0206">Cytoskeleton</keyword>
<keyword id="KW-0282">Flagellum</keyword>
<keyword id="KW-0677">Repeat</keyword>
<keyword id="KW-0853">WD repeat</keyword>
<dbReference type="EMBL" id="DS496132">
    <property type="protein sequence ID" value="EDP01978.1"/>
    <property type="molecule type" value="Genomic_DNA"/>
</dbReference>
<dbReference type="RefSeq" id="XP_001695270.1">
    <property type="nucleotide sequence ID" value="XM_001695218.1"/>
</dbReference>
<dbReference type="SMR" id="A8J1V4"/>
<dbReference type="PaxDb" id="3055-EDP01978"/>
<dbReference type="eggNOG" id="KOG2106">
    <property type="taxonomic scope" value="Eukaryota"/>
</dbReference>
<dbReference type="HOGENOM" id="CLU_000928_0_0_1"/>
<dbReference type="GO" id="GO:0005930">
    <property type="term" value="C:axoneme"/>
    <property type="evidence" value="ECO:0000250"/>
    <property type="project" value="UniProtKB"/>
</dbReference>
<dbReference type="GO" id="GO:0031514">
    <property type="term" value="C:motile cilium"/>
    <property type="evidence" value="ECO:0007669"/>
    <property type="project" value="UniProtKB-SubCell"/>
</dbReference>
<dbReference type="GO" id="GO:0016607">
    <property type="term" value="C:nuclear speck"/>
    <property type="evidence" value="ECO:0000314"/>
    <property type="project" value="GeneDB"/>
</dbReference>
<dbReference type="GO" id="GO:0060285">
    <property type="term" value="P:cilium-dependent cell motility"/>
    <property type="evidence" value="ECO:0000315"/>
    <property type="project" value="GeneDB"/>
</dbReference>
<dbReference type="FunFam" id="2.130.10.10:FF:000401">
    <property type="entry name" value="Cilia- and flagella-associated protein 44"/>
    <property type="match status" value="1"/>
</dbReference>
<dbReference type="Gene3D" id="2.130.10.10">
    <property type="entry name" value="YVTN repeat-like/Quinoprotein amine dehydrogenase"/>
    <property type="match status" value="3"/>
</dbReference>
<dbReference type="InterPro" id="IPR055439">
    <property type="entry name" value="Beta-prop_EML_1st"/>
</dbReference>
<dbReference type="InterPro" id="IPR015943">
    <property type="entry name" value="WD40/YVTN_repeat-like_dom_sf"/>
</dbReference>
<dbReference type="InterPro" id="IPR036322">
    <property type="entry name" value="WD40_repeat_dom_sf"/>
</dbReference>
<dbReference type="InterPro" id="IPR001680">
    <property type="entry name" value="WD40_rpt"/>
</dbReference>
<dbReference type="PANTHER" id="PTHR14885">
    <property type="entry name" value="CILIA- AND FLAGELLA-ASSOCIATED PROTEIN 43-RELATED"/>
    <property type="match status" value="1"/>
</dbReference>
<dbReference type="PANTHER" id="PTHR14885:SF3">
    <property type="entry name" value="CILIA- AND FLAGELLA-ASSOCIATED PROTEIN 44"/>
    <property type="match status" value="1"/>
</dbReference>
<dbReference type="Pfam" id="PF23409">
    <property type="entry name" value="Beta-prop_EML"/>
    <property type="match status" value="1"/>
</dbReference>
<dbReference type="Pfam" id="PF00400">
    <property type="entry name" value="WD40"/>
    <property type="match status" value="1"/>
</dbReference>
<dbReference type="SMART" id="SM00320">
    <property type="entry name" value="WD40"/>
    <property type="match status" value="6"/>
</dbReference>
<dbReference type="SUPFAM" id="SSF50978">
    <property type="entry name" value="WD40 repeat-like"/>
    <property type="match status" value="2"/>
</dbReference>
<dbReference type="PROSITE" id="PS00678">
    <property type="entry name" value="WD_REPEATS_1"/>
    <property type="match status" value="1"/>
</dbReference>
<dbReference type="PROSITE" id="PS50082">
    <property type="entry name" value="WD_REPEATS_2"/>
    <property type="match status" value="2"/>
</dbReference>
<dbReference type="PROSITE" id="PS50294">
    <property type="entry name" value="WD_REPEATS_REGION"/>
    <property type="match status" value="2"/>
</dbReference>
<protein>
    <recommendedName>
        <fullName evidence="5">Cilia- and flagella-associated protein 44</fullName>
    </recommendedName>
</protein>